<reference key="1">
    <citation type="journal article" date="2005" name="DNA Res.">
        <title>Complete genome sequence of the facultative anaerobic magnetotactic bacterium Magnetospirillum sp. strain AMB-1.</title>
        <authorList>
            <person name="Matsunaga T."/>
            <person name="Okamura Y."/>
            <person name="Fukuda Y."/>
            <person name="Wahyudi A.T."/>
            <person name="Murase Y."/>
            <person name="Takeyama H."/>
        </authorList>
    </citation>
    <scope>NUCLEOTIDE SEQUENCE [LARGE SCALE GENOMIC DNA]</scope>
    <source>
        <strain>ATCC 700264 / AMB-1</strain>
    </source>
</reference>
<comment type="function">
    <text evidence="1">Catalyzes the specific phosphorylation of the 3-hydroxyl group of shikimic acid using ATP as a cosubstrate.</text>
</comment>
<comment type="catalytic activity">
    <reaction evidence="1">
        <text>shikimate + ATP = 3-phosphoshikimate + ADP + H(+)</text>
        <dbReference type="Rhea" id="RHEA:13121"/>
        <dbReference type="ChEBI" id="CHEBI:15378"/>
        <dbReference type="ChEBI" id="CHEBI:30616"/>
        <dbReference type="ChEBI" id="CHEBI:36208"/>
        <dbReference type="ChEBI" id="CHEBI:145989"/>
        <dbReference type="ChEBI" id="CHEBI:456216"/>
        <dbReference type="EC" id="2.7.1.71"/>
    </reaction>
</comment>
<comment type="cofactor">
    <cofactor evidence="1">
        <name>Mg(2+)</name>
        <dbReference type="ChEBI" id="CHEBI:18420"/>
    </cofactor>
    <text evidence="1">Binds 1 Mg(2+) ion per subunit.</text>
</comment>
<comment type="pathway">
    <text evidence="1">Metabolic intermediate biosynthesis; chorismate biosynthesis; chorismate from D-erythrose 4-phosphate and phosphoenolpyruvate: step 5/7.</text>
</comment>
<comment type="subunit">
    <text evidence="1">Monomer.</text>
</comment>
<comment type="subcellular location">
    <subcellularLocation>
        <location evidence="1">Cytoplasm</location>
    </subcellularLocation>
</comment>
<comment type="similarity">
    <text evidence="1">Belongs to the shikimate kinase family.</text>
</comment>
<feature type="chain" id="PRO_0000237892" description="Shikimate kinase">
    <location>
        <begin position="1"/>
        <end position="195"/>
    </location>
</feature>
<feature type="binding site" evidence="1">
    <location>
        <begin position="31"/>
        <end position="36"/>
    </location>
    <ligand>
        <name>ATP</name>
        <dbReference type="ChEBI" id="CHEBI:30616"/>
    </ligand>
</feature>
<feature type="binding site" evidence="1">
    <location>
        <position position="35"/>
    </location>
    <ligand>
        <name>Mg(2+)</name>
        <dbReference type="ChEBI" id="CHEBI:18420"/>
    </ligand>
</feature>
<feature type="binding site" evidence="1">
    <location>
        <position position="53"/>
    </location>
    <ligand>
        <name>substrate</name>
    </ligand>
</feature>
<feature type="binding site" evidence="1">
    <location>
        <position position="77"/>
    </location>
    <ligand>
        <name>substrate</name>
    </ligand>
</feature>
<feature type="binding site" evidence="1">
    <location>
        <position position="99"/>
    </location>
    <ligand>
        <name>substrate</name>
    </ligand>
</feature>
<feature type="binding site" evidence="1">
    <location>
        <position position="137"/>
    </location>
    <ligand>
        <name>ATP</name>
        <dbReference type="ChEBI" id="CHEBI:30616"/>
    </ligand>
</feature>
<feature type="binding site" evidence="1">
    <location>
        <position position="156"/>
    </location>
    <ligand>
        <name>substrate</name>
    </ligand>
</feature>
<name>AROK_PARM1</name>
<gene>
    <name evidence="1" type="primary">aroK</name>
    <name type="ordered locus">amb3926</name>
</gene>
<sequence length="195" mass="21186">MDQGMADELARLAPLLSGRIGRTIVLVGLMGAGKSCVGRRLAARLGLDFVDSDAEFEAASGSSISDYFARFGEAAFREGERKVIARLLDGPPVVLATGGGAFVDPTTRERIKAAGTSVWIRADLELLLKRTVGRDHRPLLKQGDPREILGRLMEARYPIYAEADIIVESTDEVPEATVIRVMEGLITYLDLEKTV</sequence>
<organism>
    <name type="scientific">Paramagnetospirillum magneticum (strain ATCC 700264 / AMB-1)</name>
    <name type="common">Magnetospirillum magneticum</name>
    <dbReference type="NCBI Taxonomy" id="342108"/>
    <lineage>
        <taxon>Bacteria</taxon>
        <taxon>Pseudomonadati</taxon>
        <taxon>Pseudomonadota</taxon>
        <taxon>Alphaproteobacteria</taxon>
        <taxon>Rhodospirillales</taxon>
        <taxon>Magnetospirillaceae</taxon>
        <taxon>Paramagnetospirillum</taxon>
    </lineage>
</organism>
<evidence type="ECO:0000255" key="1">
    <source>
        <dbReference type="HAMAP-Rule" id="MF_00109"/>
    </source>
</evidence>
<dbReference type="EC" id="2.7.1.71" evidence="1"/>
<dbReference type="EMBL" id="AP007255">
    <property type="protein sequence ID" value="BAE52730.1"/>
    <property type="molecule type" value="Genomic_DNA"/>
</dbReference>
<dbReference type="SMR" id="Q2W095"/>
<dbReference type="STRING" id="342108.amb3926"/>
<dbReference type="KEGG" id="mag:amb3926"/>
<dbReference type="HOGENOM" id="CLU_057607_2_0_5"/>
<dbReference type="OrthoDB" id="9800332at2"/>
<dbReference type="UniPathway" id="UPA00053">
    <property type="reaction ID" value="UER00088"/>
</dbReference>
<dbReference type="Proteomes" id="UP000007058">
    <property type="component" value="Chromosome"/>
</dbReference>
<dbReference type="GO" id="GO:0005829">
    <property type="term" value="C:cytosol"/>
    <property type="evidence" value="ECO:0007669"/>
    <property type="project" value="TreeGrafter"/>
</dbReference>
<dbReference type="GO" id="GO:0005524">
    <property type="term" value="F:ATP binding"/>
    <property type="evidence" value="ECO:0007669"/>
    <property type="project" value="UniProtKB-UniRule"/>
</dbReference>
<dbReference type="GO" id="GO:0000287">
    <property type="term" value="F:magnesium ion binding"/>
    <property type="evidence" value="ECO:0007669"/>
    <property type="project" value="UniProtKB-UniRule"/>
</dbReference>
<dbReference type="GO" id="GO:0004765">
    <property type="term" value="F:shikimate kinase activity"/>
    <property type="evidence" value="ECO:0007669"/>
    <property type="project" value="UniProtKB-UniRule"/>
</dbReference>
<dbReference type="GO" id="GO:0008652">
    <property type="term" value="P:amino acid biosynthetic process"/>
    <property type="evidence" value="ECO:0007669"/>
    <property type="project" value="UniProtKB-KW"/>
</dbReference>
<dbReference type="GO" id="GO:0009073">
    <property type="term" value="P:aromatic amino acid family biosynthetic process"/>
    <property type="evidence" value="ECO:0007669"/>
    <property type="project" value="UniProtKB-KW"/>
</dbReference>
<dbReference type="GO" id="GO:0009423">
    <property type="term" value="P:chorismate biosynthetic process"/>
    <property type="evidence" value="ECO:0007669"/>
    <property type="project" value="UniProtKB-UniRule"/>
</dbReference>
<dbReference type="CDD" id="cd00464">
    <property type="entry name" value="SK"/>
    <property type="match status" value="1"/>
</dbReference>
<dbReference type="Gene3D" id="3.40.50.300">
    <property type="entry name" value="P-loop containing nucleotide triphosphate hydrolases"/>
    <property type="match status" value="1"/>
</dbReference>
<dbReference type="HAMAP" id="MF_00109">
    <property type="entry name" value="Shikimate_kinase"/>
    <property type="match status" value="1"/>
</dbReference>
<dbReference type="InterPro" id="IPR027417">
    <property type="entry name" value="P-loop_NTPase"/>
</dbReference>
<dbReference type="InterPro" id="IPR031322">
    <property type="entry name" value="Shikimate/glucono_kinase"/>
</dbReference>
<dbReference type="InterPro" id="IPR000623">
    <property type="entry name" value="Shikimate_kinase/TSH1"/>
</dbReference>
<dbReference type="InterPro" id="IPR023000">
    <property type="entry name" value="Shikimate_kinase_CS"/>
</dbReference>
<dbReference type="NCBIfam" id="NF010552">
    <property type="entry name" value="PRK13946.1"/>
    <property type="match status" value="1"/>
</dbReference>
<dbReference type="PANTHER" id="PTHR21087">
    <property type="entry name" value="SHIKIMATE KINASE"/>
    <property type="match status" value="1"/>
</dbReference>
<dbReference type="PANTHER" id="PTHR21087:SF16">
    <property type="entry name" value="SHIKIMATE KINASE 1, CHLOROPLASTIC"/>
    <property type="match status" value="1"/>
</dbReference>
<dbReference type="Pfam" id="PF01202">
    <property type="entry name" value="SKI"/>
    <property type="match status" value="1"/>
</dbReference>
<dbReference type="PRINTS" id="PR01100">
    <property type="entry name" value="SHIKIMTKNASE"/>
</dbReference>
<dbReference type="SUPFAM" id="SSF52540">
    <property type="entry name" value="P-loop containing nucleoside triphosphate hydrolases"/>
    <property type="match status" value="1"/>
</dbReference>
<dbReference type="PROSITE" id="PS01128">
    <property type="entry name" value="SHIKIMATE_KINASE"/>
    <property type="match status" value="1"/>
</dbReference>
<protein>
    <recommendedName>
        <fullName evidence="1">Shikimate kinase</fullName>
        <shortName evidence="1">SK</shortName>
        <ecNumber evidence="1">2.7.1.71</ecNumber>
    </recommendedName>
</protein>
<keyword id="KW-0028">Amino-acid biosynthesis</keyword>
<keyword id="KW-0057">Aromatic amino acid biosynthesis</keyword>
<keyword id="KW-0067">ATP-binding</keyword>
<keyword id="KW-0963">Cytoplasm</keyword>
<keyword id="KW-0418">Kinase</keyword>
<keyword id="KW-0460">Magnesium</keyword>
<keyword id="KW-0479">Metal-binding</keyword>
<keyword id="KW-0547">Nucleotide-binding</keyword>
<keyword id="KW-0808">Transferase</keyword>
<proteinExistence type="inferred from homology"/>
<accession>Q2W095</accession>